<name>GLYA_BACCZ</name>
<protein>
    <recommendedName>
        <fullName evidence="1">Serine hydroxymethyltransferase</fullName>
        <shortName evidence="1">SHMT</shortName>
        <shortName evidence="1">Serine methylase</shortName>
        <ecNumber evidence="1">2.1.2.1</ecNumber>
    </recommendedName>
</protein>
<proteinExistence type="inferred from homology"/>
<gene>
    <name evidence="1" type="primary">glyA</name>
    <name type="ordered locus">BCE33L5015</name>
</gene>
<evidence type="ECO:0000255" key="1">
    <source>
        <dbReference type="HAMAP-Rule" id="MF_00051"/>
    </source>
</evidence>
<organism>
    <name type="scientific">Bacillus cereus (strain ZK / E33L)</name>
    <dbReference type="NCBI Taxonomy" id="288681"/>
    <lineage>
        <taxon>Bacteria</taxon>
        <taxon>Bacillati</taxon>
        <taxon>Bacillota</taxon>
        <taxon>Bacilli</taxon>
        <taxon>Bacillales</taxon>
        <taxon>Bacillaceae</taxon>
        <taxon>Bacillus</taxon>
        <taxon>Bacillus cereus group</taxon>
    </lineage>
</organism>
<keyword id="KW-0028">Amino-acid biosynthesis</keyword>
<keyword id="KW-0963">Cytoplasm</keyword>
<keyword id="KW-0554">One-carbon metabolism</keyword>
<keyword id="KW-0663">Pyridoxal phosphate</keyword>
<keyword id="KW-0808">Transferase</keyword>
<feature type="chain" id="PRO_0000113527" description="Serine hydroxymethyltransferase">
    <location>
        <begin position="1"/>
        <end position="414"/>
    </location>
</feature>
<feature type="binding site" evidence="1">
    <location>
        <position position="118"/>
    </location>
    <ligand>
        <name>(6S)-5,6,7,8-tetrahydrofolate</name>
        <dbReference type="ChEBI" id="CHEBI:57453"/>
    </ligand>
</feature>
<feature type="binding site" evidence="1">
    <location>
        <begin position="122"/>
        <end position="124"/>
    </location>
    <ligand>
        <name>(6S)-5,6,7,8-tetrahydrofolate</name>
        <dbReference type="ChEBI" id="CHEBI:57453"/>
    </ligand>
</feature>
<feature type="binding site" evidence="1">
    <location>
        <position position="240"/>
    </location>
    <ligand>
        <name>(6S)-5,6,7,8-tetrahydrofolate</name>
        <dbReference type="ChEBI" id="CHEBI:57453"/>
    </ligand>
</feature>
<feature type="binding site" evidence="1">
    <location>
        <begin position="350"/>
        <end position="352"/>
    </location>
    <ligand>
        <name>(6S)-5,6,7,8-tetrahydrofolate</name>
        <dbReference type="ChEBI" id="CHEBI:57453"/>
    </ligand>
</feature>
<feature type="site" description="Plays an important role in substrate specificity" evidence="1">
    <location>
        <position position="226"/>
    </location>
</feature>
<feature type="modified residue" description="N6-(pyridoxal phosphate)lysine" evidence="1">
    <location>
        <position position="227"/>
    </location>
</feature>
<dbReference type="EC" id="2.1.2.1" evidence="1"/>
<dbReference type="EMBL" id="CP000001">
    <property type="protein sequence ID" value="AAU15265.1"/>
    <property type="molecule type" value="Genomic_DNA"/>
</dbReference>
<dbReference type="SMR" id="Q630T3"/>
<dbReference type="KEGG" id="bcz:BCE33L5015"/>
<dbReference type="UniPathway" id="UPA00193"/>
<dbReference type="UniPathway" id="UPA00288">
    <property type="reaction ID" value="UER01023"/>
</dbReference>
<dbReference type="Proteomes" id="UP000002612">
    <property type="component" value="Chromosome"/>
</dbReference>
<dbReference type="GO" id="GO:0005829">
    <property type="term" value="C:cytosol"/>
    <property type="evidence" value="ECO:0007669"/>
    <property type="project" value="TreeGrafter"/>
</dbReference>
<dbReference type="GO" id="GO:0004372">
    <property type="term" value="F:glycine hydroxymethyltransferase activity"/>
    <property type="evidence" value="ECO:0007669"/>
    <property type="project" value="UniProtKB-UniRule"/>
</dbReference>
<dbReference type="GO" id="GO:0030170">
    <property type="term" value="F:pyridoxal phosphate binding"/>
    <property type="evidence" value="ECO:0007669"/>
    <property type="project" value="UniProtKB-UniRule"/>
</dbReference>
<dbReference type="GO" id="GO:0019264">
    <property type="term" value="P:glycine biosynthetic process from serine"/>
    <property type="evidence" value="ECO:0007669"/>
    <property type="project" value="UniProtKB-UniRule"/>
</dbReference>
<dbReference type="GO" id="GO:0035999">
    <property type="term" value="P:tetrahydrofolate interconversion"/>
    <property type="evidence" value="ECO:0007669"/>
    <property type="project" value="UniProtKB-UniRule"/>
</dbReference>
<dbReference type="CDD" id="cd00378">
    <property type="entry name" value="SHMT"/>
    <property type="match status" value="1"/>
</dbReference>
<dbReference type="FunFam" id="3.40.640.10:FF:000001">
    <property type="entry name" value="Serine hydroxymethyltransferase"/>
    <property type="match status" value="1"/>
</dbReference>
<dbReference type="FunFam" id="3.90.1150.10:FF:000003">
    <property type="entry name" value="Serine hydroxymethyltransferase"/>
    <property type="match status" value="1"/>
</dbReference>
<dbReference type="Gene3D" id="3.90.1150.10">
    <property type="entry name" value="Aspartate Aminotransferase, domain 1"/>
    <property type="match status" value="1"/>
</dbReference>
<dbReference type="Gene3D" id="3.40.640.10">
    <property type="entry name" value="Type I PLP-dependent aspartate aminotransferase-like (Major domain)"/>
    <property type="match status" value="1"/>
</dbReference>
<dbReference type="HAMAP" id="MF_00051">
    <property type="entry name" value="SHMT"/>
    <property type="match status" value="1"/>
</dbReference>
<dbReference type="InterPro" id="IPR015424">
    <property type="entry name" value="PyrdxlP-dep_Trfase"/>
</dbReference>
<dbReference type="InterPro" id="IPR015421">
    <property type="entry name" value="PyrdxlP-dep_Trfase_major"/>
</dbReference>
<dbReference type="InterPro" id="IPR015422">
    <property type="entry name" value="PyrdxlP-dep_Trfase_small"/>
</dbReference>
<dbReference type="InterPro" id="IPR001085">
    <property type="entry name" value="Ser_HO-MeTrfase"/>
</dbReference>
<dbReference type="InterPro" id="IPR049943">
    <property type="entry name" value="Ser_HO-MeTrfase-like"/>
</dbReference>
<dbReference type="InterPro" id="IPR019798">
    <property type="entry name" value="Ser_HO-MeTrfase_PLP_BS"/>
</dbReference>
<dbReference type="InterPro" id="IPR039429">
    <property type="entry name" value="SHMT-like_dom"/>
</dbReference>
<dbReference type="NCBIfam" id="NF000586">
    <property type="entry name" value="PRK00011.1"/>
    <property type="match status" value="1"/>
</dbReference>
<dbReference type="PANTHER" id="PTHR11680">
    <property type="entry name" value="SERINE HYDROXYMETHYLTRANSFERASE"/>
    <property type="match status" value="1"/>
</dbReference>
<dbReference type="PANTHER" id="PTHR11680:SF35">
    <property type="entry name" value="SERINE HYDROXYMETHYLTRANSFERASE 1"/>
    <property type="match status" value="1"/>
</dbReference>
<dbReference type="Pfam" id="PF00464">
    <property type="entry name" value="SHMT"/>
    <property type="match status" value="1"/>
</dbReference>
<dbReference type="PIRSF" id="PIRSF000412">
    <property type="entry name" value="SHMT"/>
    <property type="match status" value="1"/>
</dbReference>
<dbReference type="SUPFAM" id="SSF53383">
    <property type="entry name" value="PLP-dependent transferases"/>
    <property type="match status" value="1"/>
</dbReference>
<dbReference type="PROSITE" id="PS00096">
    <property type="entry name" value="SHMT"/>
    <property type="match status" value="1"/>
</dbReference>
<comment type="function">
    <text evidence="1">Catalyzes the reversible interconversion of serine and glycine with tetrahydrofolate (THF) serving as the one-carbon carrier. This reaction serves as the major source of one-carbon groups required for the biosynthesis of purines, thymidylate, methionine, and other important biomolecules. Also exhibits THF-independent aldolase activity toward beta-hydroxyamino acids, producing glycine and aldehydes, via a retro-aldol mechanism.</text>
</comment>
<comment type="catalytic activity">
    <reaction evidence="1">
        <text>(6R)-5,10-methylene-5,6,7,8-tetrahydrofolate + glycine + H2O = (6S)-5,6,7,8-tetrahydrofolate + L-serine</text>
        <dbReference type="Rhea" id="RHEA:15481"/>
        <dbReference type="ChEBI" id="CHEBI:15377"/>
        <dbReference type="ChEBI" id="CHEBI:15636"/>
        <dbReference type="ChEBI" id="CHEBI:33384"/>
        <dbReference type="ChEBI" id="CHEBI:57305"/>
        <dbReference type="ChEBI" id="CHEBI:57453"/>
        <dbReference type="EC" id="2.1.2.1"/>
    </reaction>
</comment>
<comment type="cofactor">
    <cofactor evidence="1">
        <name>pyridoxal 5'-phosphate</name>
        <dbReference type="ChEBI" id="CHEBI:597326"/>
    </cofactor>
</comment>
<comment type="pathway">
    <text evidence="1">One-carbon metabolism; tetrahydrofolate interconversion.</text>
</comment>
<comment type="pathway">
    <text evidence="1">Amino-acid biosynthesis; glycine biosynthesis; glycine from L-serine: step 1/1.</text>
</comment>
<comment type="subunit">
    <text evidence="1">Homodimer.</text>
</comment>
<comment type="subcellular location">
    <subcellularLocation>
        <location evidence="1">Cytoplasm</location>
    </subcellularLocation>
</comment>
<comment type="similarity">
    <text evidence="1">Belongs to the SHMT family.</text>
</comment>
<accession>Q630T3</accession>
<reference key="1">
    <citation type="journal article" date="2006" name="J. Bacteriol.">
        <title>Pathogenomic sequence analysis of Bacillus cereus and Bacillus thuringiensis isolates closely related to Bacillus anthracis.</title>
        <authorList>
            <person name="Han C.S."/>
            <person name="Xie G."/>
            <person name="Challacombe J.F."/>
            <person name="Altherr M.R."/>
            <person name="Bhotika S.S."/>
            <person name="Bruce D."/>
            <person name="Campbell C.S."/>
            <person name="Campbell M.L."/>
            <person name="Chen J."/>
            <person name="Chertkov O."/>
            <person name="Cleland C."/>
            <person name="Dimitrijevic M."/>
            <person name="Doggett N.A."/>
            <person name="Fawcett J.J."/>
            <person name="Glavina T."/>
            <person name="Goodwin L.A."/>
            <person name="Hill K.K."/>
            <person name="Hitchcock P."/>
            <person name="Jackson P.J."/>
            <person name="Keim P."/>
            <person name="Kewalramani A.R."/>
            <person name="Longmire J."/>
            <person name="Lucas S."/>
            <person name="Malfatti S."/>
            <person name="McMurry K."/>
            <person name="Meincke L.J."/>
            <person name="Misra M."/>
            <person name="Moseman B.L."/>
            <person name="Mundt M."/>
            <person name="Munk A.C."/>
            <person name="Okinaka R.T."/>
            <person name="Parson-Quintana B."/>
            <person name="Reilly L.P."/>
            <person name="Richardson P."/>
            <person name="Robinson D.L."/>
            <person name="Rubin E."/>
            <person name="Saunders E."/>
            <person name="Tapia R."/>
            <person name="Tesmer J.G."/>
            <person name="Thayer N."/>
            <person name="Thompson L.S."/>
            <person name="Tice H."/>
            <person name="Ticknor L.O."/>
            <person name="Wills P.L."/>
            <person name="Brettin T.S."/>
            <person name="Gilna P."/>
        </authorList>
    </citation>
    <scope>NUCLEOTIDE SEQUENCE [LARGE SCALE GENOMIC DNA]</scope>
    <source>
        <strain>ZK / E33L</strain>
    </source>
</reference>
<sequence length="414" mass="45277">MVDHLKRQDEKVFAAIEAELGRQRSKIELIASENFVSEAVMEAQGSVLTNKYAEGYPGKRYYGGCEHVDVVEDIARDRVKEIFGAEHVNVQPHSGAQANMAVYFTILEQGDTVLGMNLSHGGHLTHGSPVNFSGVQYNFVEYGVDAESHRINYDDVLAKAKEHKPKLIVAGASAYPRVIDFKRFREIADEVGAYLMVDMAHIAGLVAAGLHPNPVPHAHFVTTTTHKTLRGPRGGMILCEEQFAKQIDKSIFPGIQGGPLMHVIAAKAVAFGEALQDDFKTYAQNIINNANRLAEGLQKEGLTLVSGGTDNHLILIDVRNLEITGKVAEHVLDEVGITVNKNTIPFETASPFVTSGVRIGTAAVTSRGFGLEEMDEIASLIAYTLKNHENEAALEEARKRVEALTSKFPMYTDL</sequence>